<organism>
    <name type="scientific">Xylella fastidiosa (strain Temecula1 / ATCC 700964)</name>
    <dbReference type="NCBI Taxonomy" id="183190"/>
    <lineage>
        <taxon>Bacteria</taxon>
        <taxon>Pseudomonadati</taxon>
        <taxon>Pseudomonadota</taxon>
        <taxon>Gammaproteobacteria</taxon>
        <taxon>Lysobacterales</taxon>
        <taxon>Lysobacteraceae</taxon>
        <taxon>Xylella</taxon>
    </lineage>
</organism>
<protein>
    <recommendedName>
        <fullName evidence="1">ATP-dependent Clp protease proteolytic subunit</fullName>
        <ecNumber evidence="1">3.4.21.92</ecNumber>
    </recommendedName>
    <alternativeName>
        <fullName evidence="1">Endopeptidase Clp</fullName>
    </alternativeName>
</protein>
<name>CLPP_XYLFT</name>
<keyword id="KW-0963">Cytoplasm</keyword>
<keyword id="KW-0378">Hydrolase</keyword>
<keyword id="KW-0645">Protease</keyword>
<keyword id="KW-1185">Reference proteome</keyword>
<keyword id="KW-0720">Serine protease</keyword>
<gene>
    <name evidence="1" type="primary">clpP</name>
    <name type="ordered locus">PD_0472</name>
</gene>
<accession>Q87E51</accession>
<proteinExistence type="inferred from homology"/>
<comment type="function">
    <text evidence="1">Cleaves peptides in various proteins in a process that requires ATP hydrolysis. Has a chymotrypsin-like activity. Plays a major role in the degradation of misfolded proteins.</text>
</comment>
<comment type="catalytic activity">
    <reaction evidence="1">
        <text>Hydrolysis of proteins to small peptides in the presence of ATP and magnesium. alpha-casein is the usual test substrate. In the absence of ATP, only oligopeptides shorter than five residues are hydrolyzed (such as succinyl-Leu-Tyr-|-NHMec, and Leu-Tyr-Leu-|-Tyr-Trp, in which cleavage of the -Tyr-|-Leu- and -Tyr-|-Trp bonds also occurs).</text>
        <dbReference type="EC" id="3.4.21.92"/>
    </reaction>
</comment>
<comment type="subunit">
    <text evidence="1">Fourteen ClpP subunits assemble into 2 heptameric rings which stack back to back to give a disk-like structure with a central cavity, resembling the structure of eukaryotic proteasomes.</text>
</comment>
<comment type="subcellular location">
    <subcellularLocation>
        <location evidence="1">Cytoplasm</location>
    </subcellularLocation>
</comment>
<comment type="similarity">
    <text evidence="1">Belongs to the peptidase S14 family.</text>
</comment>
<reference key="1">
    <citation type="journal article" date="2003" name="J. Bacteriol.">
        <title>Comparative analyses of the complete genome sequences of Pierce's disease and citrus variegated chlorosis strains of Xylella fastidiosa.</title>
        <authorList>
            <person name="Van Sluys M.A."/>
            <person name="de Oliveira M.C."/>
            <person name="Monteiro-Vitorello C.B."/>
            <person name="Miyaki C.Y."/>
            <person name="Furlan L.R."/>
            <person name="Camargo L.E.A."/>
            <person name="da Silva A.C.R."/>
            <person name="Moon D.H."/>
            <person name="Takita M.A."/>
            <person name="Lemos E.G.M."/>
            <person name="Machado M.A."/>
            <person name="Ferro M.I.T."/>
            <person name="da Silva F.R."/>
            <person name="Goldman M.H.S."/>
            <person name="Goldman G.H."/>
            <person name="Lemos M.V.F."/>
            <person name="El-Dorry H."/>
            <person name="Tsai S.M."/>
            <person name="Carrer H."/>
            <person name="Carraro D.M."/>
            <person name="de Oliveira R.C."/>
            <person name="Nunes L.R."/>
            <person name="Siqueira W.J."/>
            <person name="Coutinho L.L."/>
            <person name="Kimura E.T."/>
            <person name="Ferro E.S."/>
            <person name="Harakava R."/>
            <person name="Kuramae E.E."/>
            <person name="Marino C.L."/>
            <person name="Giglioti E."/>
            <person name="Abreu I.L."/>
            <person name="Alves L.M.C."/>
            <person name="do Amaral A.M."/>
            <person name="Baia G.S."/>
            <person name="Blanco S.R."/>
            <person name="Brito M.S."/>
            <person name="Cannavan F.S."/>
            <person name="Celestino A.V."/>
            <person name="da Cunha A.F."/>
            <person name="Fenille R.C."/>
            <person name="Ferro J.A."/>
            <person name="Formighieri E.F."/>
            <person name="Kishi L.T."/>
            <person name="Leoni S.G."/>
            <person name="Oliveira A.R."/>
            <person name="Rosa V.E. Jr."/>
            <person name="Sassaki F.T."/>
            <person name="Sena J.A.D."/>
            <person name="de Souza A.A."/>
            <person name="Truffi D."/>
            <person name="Tsukumo F."/>
            <person name="Yanai G.M."/>
            <person name="Zaros L.G."/>
            <person name="Civerolo E.L."/>
            <person name="Simpson A.J.G."/>
            <person name="Almeida N.F. Jr."/>
            <person name="Setubal J.C."/>
            <person name="Kitajima J.P."/>
        </authorList>
    </citation>
    <scope>NUCLEOTIDE SEQUENCE [LARGE SCALE GENOMIC DNA]</scope>
    <source>
        <strain>Temecula1 / ATCC 700964</strain>
    </source>
</reference>
<sequence>MDDVTKALNLVPMVVEQTSRGERAYDIYSRLLKERLIFLVGPIDDYMANLIVAQLLFLEAENPEKDINIYINSPGGVVTAGMAIYDTMQYIKPAVSTICVGQAASMGALLLASGASGKRYALPNSRVMIHQPLGGFQGQATDIDIHAREILALRARLNEILAKHTGQSLETIAHDTERDNFKSAVDAQAYGLVDQVFGQRQEELIQSS</sequence>
<evidence type="ECO:0000255" key="1">
    <source>
        <dbReference type="HAMAP-Rule" id="MF_00444"/>
    </source>
</evidence>
<feature type="chain" id="PRO_0000179723" description="ATP-dependent Clp protease proteolytic subunit">
    <location>
        <begin position="1"/>
        <end position="208"/>
    </location>
</feature>
<feature type="active site" description="Nucleophile" evidence="1">
    <location>
        <position position="105"/>
    </location>
</feature>
<feature type="active site" evidence="1">
    <location>
        <position position="130"/>
    </location>
</feature>
<dbReference type="EC" id="3.4.21.92" evidence="1"/>
<dbReference type="EMBL" id="AE009442">
    <property type="protein sequence ID" value="AAO28349.1"/>
    <property type="molecule type" value="Genomic_DNA"/>
</dbReference>
<dbReference type="RefSeq" id="WP_011097655.1">
    <property type="nucleotide sequence ID" value="NC_004556.1"/>
</dbReference>
<dbReference type="SMR" id="Q87E51"/>
<dbReference type="MEROPS" id="S14.001"/>
<dbReference type="GeneID" id="93904175"/>
<dbReference type="KEGG" id="xft:PD_0472"/>
<dbReference type="HOGENOM" id="CLU_058707_3_3_6"/>
<dbReference type="Proteomes" id="UP000002516">
    <property type="component" value="Chromosome"/>
</dbReference>
<dbReference type="GO" id="GO:0005737">
    <property type="term" value="C:cytoplasm"/>
    <property type="evidence" value="ECO:0007669"/>
    <property type="project" value="UniProtKB-SubCell"/>
</dbReference>
<dbReference type="GO" id="GO:0009368">
    <property type="term" value="C:endopeptidase Clp complex"/>
    <property type="evidence" value="ECO:0007669"/>
    <property type="project" value="TreeGrafter"/>
</dbReference>
<dbReference type="GO" id="GO:0004176">
    <property type="term" value="F:ATP-dependent peptidase activity"/>
    <property type="evidence" value="ECO:0007669"/>
    <property type="project" value="InterPro"/>
</dbReference>
<dbReference type="GO" id="GO:0051117">
    <property type="term" value="F:ATPase binding"/>
    <property type="evidence" value="ECO:0007669"/>
    <property type="project" value="TreeGrafter"/>
</dbReference>
<dbReference type="GO" id="GO:0004252">
    <property type="term" value="F:serine-type endopeptidase activity"/>
    <property type="evidence" value="ECO:0007669"/>
    <property type="project" value="UniProtKB-UniRule"/>
</dbReference>
<dbReference type="GO" id="GO:0006515">
    <property type="term" value="P:protein quality control for misfolded or incompletely synthesized proteins"/>
    <property type="evidence" value="ECO:0007669"/>
    <property type="project" value="TreeGrafter"/>
</dbReference>
<dbReference type="CDD" id="cd07017">
    <property type="entry name" value="S14_ClpP_2"/>
    <property type="match status" value="1"/>
</dbReference>
<dbReference type="FunFam" id="3.90.226.10:FF:000001">
    <property type="entry name" value="ATP-dependent Clp protease proteolytic subunit"/>
    <property type="match status" value="1"/>
</dbReference>
<dbReference type="Gene3D" id="3.90.226.10">
    <property type="entry name" value="2-enoyl-CoA Hydratase, Chain A, domain 1"/>
    <property type="match status" value="1"/>
</dbReference>
<dbReference type="HAMAP" id="MF_00444">
    <property type="entry name" value="ClpP"/>
    <property type="match status" value="1"/>
</dbReference>
<dbReference type="InterPro" id="IPR001907">
    <property type="entry name" value="ClpP"/>
</dbReference>
<dbReference type="InterPro" id="IPR029045">
    <property type="entry name" value="ClpP/crotonase-like_dom_sf"/>
</dbReference>
<dbReference type="InterPro" id="IPR023562">
    <property type="entry name" value="ClpP/TepA"/>
</dbReference>
<dbReference type="InterPro" id="IPR033135">
    <property type="entry name" value="ClpP_His_AS"/>
</dbReference>
<dbReference type="InterPro" id="IPR018215">
    <property type="entry name" value="ClpP_Ser_AS"/>
</dbReference>
<dbReference type="NCBIfam" id="TIGR00493">
    <property type="entry name" value="clpP"/>
    <property type="match status" value="1"/>
</dbReference>
<dbReference type="NCBIfam" id="NF001368">
    <property type="entry name" value="PRK00277.1"/>
    <property type="match status" value="1"/>
</dbReference>
<dbReference type="NCBIfam" id="NF009205">
    <property type="entry name" value="PRK12553.1"/>
    <property type="match status" value="1"/>
</dbReference>
<dbReference type="PANTHER" id="PTHR10381">
    <property type="entry name" value="ATP-DEPENDENT CLP PROTEASE PROTEOLYTIC SUBUNIT"/>
    <property type="match status" value="1"/>
</dbReference>
<dbReference type="PANTHER" id="PTHR10381:SF70">
    <property type="entry name" value="ATP-DEPENDENT CLP PROTEASE PROTEOLYTIC SUBUNIT"/>
    <property type="match status" value="1"/>
</dbReference>
<dbReference type="Pfam" id="PF00574">
    <property type="entry name" value="CLP_protease"/>
    <property type="match status" value="1"/>
</dbReference>
<dbReference type="PRINTS" id="PR00127">
    <property type="entry name" value="CLPPROTEASEP"/>
</dbReference>
<dbReference type="SUPFAM" id="SSF52096">
    <property type="entry name" value="ClpP/crotonase"/>
    <property type="match status" value="1"/>
</dbReference>
<dbReference type="PROSITE" id="PS00382">
    <property type="entry name" value="CLP_PROTEASE_HIS"/>
    <property type="match status" value="1"/>
</dbReference>
<dbReference type="PROSITE" id="PS00381">
    <property type="entry name" value="CLP_PROTEASE_SER"/>
    <property type="match status" value="1"/>
</dbReference>